<sequence>MAAAAQTGKKKTVRPGEWKIWLLYAVGFVPAVWTFYLGASGNLGADPVKTFEHTLGLWALRFLILTLMVTPIRDLTGMAFLRYRRALGLLAFYYALMHFATYMVLDQGLNISAIVTDIVRRPFITIGMISLVLLVPLALTSNNWSIRKLGRRWNSLHKLVYVAIAGGAIHFIMSVKSWPAEPVIYAGIVSALLLWRLVRPHARNRKPVSRPRGEAMAVKK</sequence>
<keyword id="KW-0997">Cell inner membrane</keyword>
<keyword id="KW-1003">Cell membrane</keyword>
<keyword id="KW-0249">Electron transport</keyword>
<keyword id="KW-0285">Flavoprotein</keyword>
<keyword id="KW-0288">FMN</keyword>
<keyword id="KW-0349">Heme</keyword>
<keyword id="KW-0408">Iron</keyword>
<keyword id="KW-0472">Membrane</keyword>
<keyword id="KW-0479">Metal-binding</keyword>
<keyword id="KW-1185">Reference proteome</keyword>
<keyword id="KW-0812">Transmembrane</keyword>
<keyword id="KW-1133">Transmembrane helix</keyword>
<keyword id="KW-0813">Transport</keyword>
<reference key="1">
    <citation type="journal article" date="2011" name="J. Bacteriol.">
        <title>Genome of Ochrobactrum anthropi ATCC 49188 T, a versatile opportunistic pathogen and symbiont of several eukaryotic hosts.</title>
        <authorList>
            <person name="Chain P.S."/>
            <person name="Lang D.M."/>
            <person name="Comerci D.J."/>
            <person name="Malfatti S.A."/>
            <person name="Vergez L.M."/>
            <person name="Shin M."/>
            <person name="Ugalde R.A."/>
            <person name="Garcia E."/>
            <person name="Tolmasky M.E."/>
        </authorList>
    </citation>
    <scope>NUCLEOTIDE SEQUENCE [LARGE SCALE GENOMIC DNA]</scope>
    <source>
        <strain>ATCC 49188 / DSM 6882 / CCUG 24695 / JCM 21032 / LMG 3331 / NBRC 15819 / NCTC 12168 / Alc 37</strain>
    </source>
</reference>
<gene>
    <name evidence="1" type="primary">msrQ</name>
    <name type="ordered locus">Oant_1367</name>
</gene>
<dbReference type="EMBL" id="CP000758">
    <property type="protein sequence ID" value="ABS14084.1"/>
    <property type="molecule type" value="Genomic_DNA"/>
</dbReference>
<dbReference type="RefSeq" id="WP_010659435.1">
    <property type="nucleotide sequence ID" value="NC_009667.1"/>
</dbReference>
<dbReference type="SMR" id="A6WYN0"/>
<dbReference type="STRING" id="439375.Oant_1367"/>
<dbReference type="GeneID" id="61318129"/>
<dbReference type="KEGG" id="oan:Oant_1367"/>
<dbReference type="eggNOG" id="COG2717">
    <property type="taxonomic scope" value="Bacteria"/>
</dbReference>
<dbReference type="HOGENOM" id="CLU_080662_2_0_5"/>
<dbReference type="PhylomeDB" id="A6WYN0"/>
<dbReference type="Proteomes" id="UP000002301">
    <property type="component" value="Chromosome 1"/>
</dbReference>
<dbReference type="GO" id="GO:0005886">
    <property type="term" value="C:plasma membrane"/>
    <property type="evidence" value="ECO:0007669"/>
    <property type="project" value="UniProtKB-SubCell"/>
</dbReference>
<dbReference type="GO" id="GO:0009055">
    <property type="term" value="F:electron transfer activity"/>
    <property type="evidence" value="ECO:0007669"/>
    <property type="project" value="UniProtKB-UniRule"/>
</dbReference>
<dbReference type="GO" id="GO:0010181">
    <property type="term" value="F:FMN binding"/>
    <property type="evidence" value="ECO:0007669"/>
    <property type="project" value="UniProtKB-UniRule"/>
</dbReference>
<dbReference type="GO" id="GO:0020037">
    <property type="term" value="F:heme binding"/>
    <property type="evidence" value="ECO:0007669"/>
    <property type="project" value="UniProtKB-UniRule"/>
</dbReference>
<dbReference type="GO" id="GO:0046872">
    <property type="term" value="F:metal ion binding"/>
    <property type="evidence" value="ECO:0007669"/>
    <property type="project" value="UniProtKB-KW"/>
</dbReference>
<dbReference type="GO" id="GO:0016679">
    <property type="term" value="F:oxidoreductase activity, acting on diphenols and related substances as donors"/>
    <property type="evidence" value="ECO:0007669"/>
    <property type="project" value="TreeGrafter"/>
</dbReference>
<dbReference type="GO" id="GO:0030091">
    <property type="term" value="P:protein repair"/>
    <property type="evidence" value="ECO:0007669"/>
    <property type="project" value="UniProtKB-UniRule"/>
</dbReference>
<dbReference type="HAMAP" id="MF_01207">
    <property type="entry name" value="MsrQ"/>
    <property type="match status" value="1"/>
</dbReference>
<dbReference type="InterPro" id="IPR013130">
    <property type="entry name" value="Fe3_Rdtase_TM_dom"/>
</dbReference>
<dbReference type="InterPro" id="IPR022837">
    <property type="entry name" value="MsrQ-like"/>
</dbReference>
<dbReference type="NCBIfam" id="NF003833">
    <property type="entry name" value="PRK05419.1-5"/>
    <property type="match status" value="1"/>
</dbReference>
<dbReference type="PANTHER" id="PTHR36964">
    <property type="entry name" value="PROTEIN-METHIONINE-SULFOXIDE REDUCTASE HEME-BINDING SUBUNIT MSRQ"/>
    <property type="match status" value="1"/>
</dbReference>
<dbReference type="PANTHER" id="PTHR36964:SF1">
    <property type="entry name" value="PROTEIN-METHIONINE-SULFOXIDE REDUCTASE HEME-BINDING SUBUNIT MSRQ"/>
    <property type="match status" value="1"/>
</dbReference>
<dbReference type="Pfam" id="PF01794">
    <property type="entry name" value="Ferric_reduct"/>
    <property type="match status" value="1"/>
</dbReference>
<evidence type="ECO:0000255" key="1">
    <source>
        <dbReference type="HAMAP-Rule" id="MF_01207"/>
    </source>
</evidence>
<organism>
    <name type="scientific">Brucella anthropi (strain ATCC 49188 / DSM 6882 / CCUG 24695 / JCM 21032 / LMG 3331 / NBRC 15819 / NCTC 12168 / Alc 37)</name>
    <name type="common">Ochrobactrum anthropi</name>
    <dbReference type="NCBI Taxonomy" id="439375"/>
    <lineage>
        <taxon>Bacteria</taxon>
        <taxon>Pseudomonadati</taxon>
        <taxon>Pseudomonadota</taxon>
        <taxon>Alphaproteobacteria</taxon>
        <taxon>Hyphomicrobiales</taxon>
        <taxon>Brucellaceae</taxon>
        <taxon>Brucella/Ochrobactrum group</taxon>
        <taxon>Brucella</taxon>
    </lineage>
</organism>
<comment type="function">
    <text evidence="1">Part of the MsrPQ system that repairs oxidized periplasmic proteins containing methionine sulfoxide residues (Met-O), using respiratory chain electrons. Thus protects these proteins from oxidative-stress damage caused by reactive species of oxygen and chlorine generated by the host defense mechanisms. MsrPQ is essential for the maintenance of envelope integrity under bleach stress, rescuing a wide series of structurally unrelated periplasmic proteins from methionine oxidation. MsrQ provides electrons for reduction to the reductase catalytic subunit MsrP, using the quinone pool of the respiratory chain.</text>
</comment>
<comment type="cofactor">
    <cofactor evidence="1">
        <name>FMN</name>
        <dbReference type="ChEBI" id="CHEBI:58210"/>
    </cofactor>
    <text evidence="1">Binds 1 FMN per subunit.</text>
</comment>
<comment type="cofactor">
    <cofactor evidence="1">
        <name>heme b</name>
        <dbReference type="ChEBI" id="CHEBI:60344"/>
    </cofactor>
    <text evidence="1">Binds 1 heme b (iron(II)-protoporphyrin IX) group per subunit.</text>
</comment>
<comment type="subunit">
    <text evidence="1">Heterodimer of a catalytic subunit (MsrP) and a heme-binding subunit (MsrQ).</text>
</comment>
<comment type="subcellular location">
    <subcellularLocation>
        <location evidence="1">Cell inner membrane</location>
        <topology evidence="1">Multi-pass membrane protein</topology>
    </subcellularLocation>
</comment>
<comment type="similarity">
    <text evidence="1">Belongs to the MsrQ family.</text>
</comment>
<protein>
    <recommendedName>
        <fullName evidence="1">Protein-methionine-sulfoxide reductase heme-binding subunit MsrQ</fullName>
    </recommendedName>
    <alternativeName>
        <fullName evidence="1">Flavocytochrome MsrQ</fullName>
    </alternativeName>
</protein>
<feature type="chain" id="PRO_1000066178" description="Protein-methionine-sulfoxide reductase heme-binding subunit MsrQ">
    <location>
        <begin position="1"/>
        <end position="220"/>
    </location>
</feature>
<feature type="transmembrane region" description="Helical" evidence="1">
    <location>
        <begin position="20"/>
        <end position="40"/>
    </location>
</feature>
<feature type="transmembrane region" description="Helical" evidence="1">
    <location>
        <begin position="52"/>
        <end position="72"/>
    </location>
</feature>
<feature type="transmembrane region" description="Helical" evidence="1">
    <location>
        <begin position="86"/>
        <end position="106"/>
    </location>
</feature>
<feature type="transmembrane region" description="Helical" evidence="1">
    <location>
        <begin position="122"/>
        <end position="142"/>
    </location>
</feature>
<feature type="transmembrane region" description="Helical" evidence="1">
    <location>
        <begin position="159"/>
        <end position="179"/>
    </location>
</feature>
<name>MSRQ_BRUA4</name>
<accession>A6WYN0</accession>
<proteinExistence type="inferred from homology"/>